<organism>
    <name type="scientific">Synechococcus elongatus (strain ATCC 33912 / PCC 7942 / FACHB-805)</name>
    <name type="common">Anacystis nidulans R2</name>
    <dbReference type="NCBI Taxonomy" id="1140"/>
    <lineage>
        <taxon>Bacteria</taxon>
        <taxon>Bacillati</taxon>
        <taxon>Cyanobacteriota</taxon>
        <taxon>Cyanophyceae</taxon>
        <taxon>Synechococcales</taxon>
        <taxon>Synechococcaceae</taxon>
        <taxon>Synechococcus</taxon>
    </lineage>
</organism>
<proteinExistence type="inferred from homology"/>
<dbReference type="EC" id="4.2.1.33" evidence="1"/>
<dbReference type="EMBL" id="CP000100">
    <property type="protein sequence ID" value="ABB57928.1"/>
    <property type="molecule type" value="Genomic_DNA"/>
</dbReference>
<dbReference type="RefSeq" id="WP_011244507.1">
    <property type="nucleotide sequence ID" value="NZ_JACJTX010000001.1"/>
</dbReference>
<dbReference type="SMR" id="Q31LZ1"/>
<dbReference type="STRING" id="1140.Synpcc7942_1898"/>
<dbReference type="PaxDb" id="1140-Synpcc7942_1898"/>
<dbReference type="GeneID" id="72430770"/>
<dbReference type="KEGG" id="syf:Synpcc7942_1898"/>
<dbReference type="eggNOG" id="COG0065">
    <property type="taxonomic scope" value="Bacteria"/>
</dbReference>
<dbReference type="HOGENOM" id="CLU_006714_3_4_3"/>
<dbReference type="OrthoDB" id="9802769at2"/>
<dbReference type="BioCyc" id="SYNEL:SYNPCC7942_1898-MONOMER"/>
<dbReference type="UniPathway" id="UPA00048">
    <property type="reaction ID" value="UER00071"/>
</dbReference>
<dbReference type="Proteomes" id="UP000889800">
    <property type="component" value="Chromosome"/>
</dbReference>
<dbReference type="GO" id="GO:0003861">
    <property type="term" value="F:3-isopropylmalate dehydratase activity"/>
    <property type="evidence" value="ECO:0007669"/>
    <property type="project" value="UniProtKB-UniRule"/>
</dbReference>
<dbReference type="GO" id="GO:0051539">
    <property type="term" value="F:4 iron, 4 sulfur cluster binding"/>
    <property type="evidence" value="ECO:0007669"/>
    <property type="project" value="UniProtKB-KW"/>
</dbReference>
<dbReference type="GO" id="GO:0046872">
    <property type="term" value="F:metal ion binding"/>
    <property type="evidence" value="ECO:0007669"/>
    <property type="project" value="UniProtKB-KW"/>
</dbReference>
<dbReference type="GO" id="GO:0009098">
    <property type="term" value="P:L-leucine biosynthetic process"/>
    <property type="evidence" value="ECO:0007669"/>
    <property type="project" value="UniProtKB-UniRule"/>
</dbReference>
<dbReference type="CDD" id="cd01583">
    <property type="entry name" value="IPMI"/>
    <property type="match status" value="1"/>
</dbReference>
<dbReference type="Gene3D" id="3.30.499.10">
    <property type="entry name" value="Aconitase, domain 3"/>
    <property type="match status" value="2"/>
</dbReference>
<dbReference type="HAMAP" id="MF_01026">
    <property type="entry name" value="LeuC_type1"/>
    <property type="match status" value="1"/>
</dbReference>
<dbReference type="InterPro" id="IPR004430">
    <property type="entry name" value="3-IsopropMal_deHydase_lsu"/>
</dbReference>
<dbReference type="InterPro" id="IPR015931">
    <property type="entry name" value="Acnase/IPM_dHydase_lsu_aba_1/3"/>
</dbReference>
<dbReference type="InterPro" id="IPR001030">
    <property type="entry name" value="Acoase/IPM_deHydtase_lsu_aba"/>
</dbReference>
<dbReference type="InterPro" id="IPR018136">
    <property type="entry name" value="Aconitase_4Fe-4S_BS"/>
</dbReference>
<dbReference type="InterPro" id="IPR036008">
    <property type="entry name" value="Aconitase_4Fe-4S_dom"/>
</dbReference>
<dbReference type="InterPro" id="IPR050067">
    <property type="entry name" value="IPM_dehydratase_rel_enz"/>
</dbReference>
<dbReference type="InterPro" id="IPR033941">
    <property type="entry name" value="IPMI_cat"/>
</dbReference>
<dbReference type="NCBIfam" id="TIGR00170">
    <property type="entry name" value="leuC"/>
    <property type="match status" value="1"/>
</dbReference>
<dbReference type="NCBIfam" id="NF004016">
    <property type="entry name" value="PRK05478.1"/>
    <property type="match status" value="1"/>
</dbReference>
<dbReference type="NCBIfam" id="NF009116">
    <property type="entry name" value="PRK12466.1"/>
    <property type="match status" value="1"/>
</dbReference>
<dbReference type="PANTHER" id="PTHR43822:SF9">
    <property type="entry name" value="3-ISOPROPYLMALATE DEHYDRATASE"/>
    <property type="match status" value="1"/>
</dbReference>
<dbReference type="PANTHER" id="PTHR43822">
    <property type="entry name" value="HOMOACONITASE, MITOCHONDRIAL-RELATED"/>
    <property type="match status" value="1"/>
</dbReference>
<dbReference type="Pfam" id="PF00330">
    <property type="entry name" value="Aconitase"/>
    <property type="match status" value="1"/>
</dbReference>
<dbReference type="PRINTS" id="PR00415">
    <property type="entry name" value="ACONITASE"/>
</dbReference>
<dbReference type="SUPFAM" id="SSF53732">
    <property type="entry name" value="Aconitase iron-sulfur domain"/>
    <property type="match status" value="1"/>
</dbReference>
<dbReference type="PROSITE" id="PS00450">
    <property type="entry name" value="ACONITASE_1"/>
    <property type="match status" value="1"/>
</dbReference>
<dbReference type="PROSITE" id="PS01244">
    <property type="entry name" value="ACONITASE_2"/>
    <property type="match status" value="1"/>
</dbReference>
<evidence type="ECO:0000255" key="1">
    <source>
        <dbReference type="HAMAP-Rule" id="MF_01026"/>
    </source>
</evidence>
<comment type="function">
    <text evidence="1">Catalyzes the isomerization between 2-isopropylmalate and 3-isopropylmalate, via the formation of 2-isopropylmaleate.</text>
</comment>
<comment type="catalytic activity">
    <reaction evidence="1">
        <text>(2R,3S)-3-isopropylmalate = (2S)-2-isopropylmalate</text>
        <dbReference type="Rhea" id="RHEA:32287"/>
        <dbReference type="ChEBI" id="CHEBI:1178"/>
        <dbReference type="ChEBI" id="CHEBI:35121"/>
        <dbReference type="EC" id="4.2.1.33"/>
    </reaction>
</comment>
<comment type="cofactor">
    <cofactor evidence="1">
        <name>[4Fe-4S] cluster</name>
        <dbReference type="ChEBI" id="CHEBI:49883"/>
    </cofactor>
    <text evidence="1">Binds 1 [4Fe-4S] cluster per subunit.</text>
</comment>
<comment type="pathway">
    <text evidence="1">Amino-acid biosynthesis; L-leucine biosynthesis; L-leucine from 3-methyl-2-oxobutanoate: step 2/4.</text>
</comment>
<comment type="subunit">
    <text evidence="1">Heterodimer of LeuC and LeuD.</text>
</comment>
<comment type="similarity">
    <text evidence="1">Belongs to the aconitase/IPM isomerase family. LeuC type 1 subfamily.</text>
</comment>
<sequence>MSRGTLFDKVWDLHTVATLPSGQTQLFIGLHLIHEVTSPQAFSMLRDRGLTVKFPGRTVATVDHIVPTENQARPFADSLAEEMIVTLERNCRENGIRFYNIGSGSQGIVHVIAPEQGLTQPGMTIACGDSHTSTHGAFGAIAFGIGTSQVRDVLASQTLALSKLKVRKIEVNGELQPGVYAKDVILHIIRKLGVKGGVGYAYEFAGSTFAAMSMEERMTVCNMAIEGGARCGYVNPDQITYDYLQGREFAPQGEAWDRAIAWWESLRSEADAEYDDVVVFDAAEIAPTVTWGITPGQGIGITETIPTPDSLLDEDRAVAAEAYSYMDLEPGAPLQGTKVDVCFIGSCTNGRLSDLREAAKVAQGRKVAAGIKAFVVPGSERVKQQAEAEGLDQIFTAAGFEWRQAGCSMCLAMNPDKLEGRQISASSSNRNFKGRQGSASGRTLLMSPAMVAAAAIAGEVTDVRNWLN</sequence>
<feature type="chain" id="PRO_1000063623" description="3-isopropylmalate dehydratase large subunit">
    <location>
        <begin position="1"/>
        <end position="468"/>
    </location>
</feature>
<feature type="binding site" evidence="1">
    <location>
        <position position="347"/>
    </location>
    <ligand>
        <name>[4Fe-4S] cluster</name>
        <dbReference type="ChEBI" id="CHEBI:49883"/>
    </ligand>
</feature>
<feature type="binding site" evidence="1">
    <location>
        <position position="407"/>
    </location>
    <ligand>
        <name>[4Fe-4S] cluster</name>
        <dbReference type="ChEBI" id="CHEBI:49883"/>
    </ligand>
</feature>
<feature type="binding site" evidence="1">
    <location>
        <position position="410"/>
    </location>
    <ligand>
        <name>[4Fe-4S] cluster</name>
        <dbReference type="ChEBI" id="CHEBI:49883"/>
    </ligand>
</feature>
<name>LEUC_SYNE7</name>
<protein>
    <recommendedName>
        <fullName evidence="1">3-isopropylmalate dehydratase large subunit</fullName>
        <ecNumber evidence="1">4.2.1.33</ecNumber>
    </recommendedName>
    <alternativeName>
        <fullName evidence="1">Alpha-IPM isomerase</fullName>
        <shortName evidence="1">IPMI</shortName>
    </alternativeName>
    <alternativeName>
        <fullName evidence="1">Isopropylmalate isomerase</fullName>
    </alternativeName>
</protein>
<reference key="1">
    <citation type="submission" date="2005-08" db="EMBL/GenBank/DDBJ databases">
        <title>Complete sequence of chromosome 1 of Synechococcus elongatus PCC 7942.</title>
        <authorList>
            <consortium name="US DOE Joint Genome Institute"/>
            <person name="Copeland A."/>
            <person name="Lucas S."/>
            <person name="Lapidus A."/>
            <person name="Barry K."/>
            <person name="Detter J.C."/>
            <person name="Glavina T."/>
            <person name="Hammon N."/>
            <person name="Israni S."/>
            <person name="Pitluck S."/>
            <person name="Schmutz J."/>
            <person name="Larimer F."/>
            <person name="Land M."/>
            <person name="Kyrpides N."/>
            <person name="Lykidis A."/>
            <person name="Golden S."/>
            <person name="Richardson P."/>
        </authorList>
    </citation>
    <scope>NUCLEOTIDE SEQUENCE [LARGE SCALE GENOMIC DNA]</scope>
    <source>
        <strain>ATCC 33912 / PCC 7942 / FACHB-805</strain>
    </source>
</reference>
<keyword id="KW-0004">4Fe-4S</keyword>
<keyword id="KW-0028">Amino-acid biosynthesis</keyword>
<keyword id="KW-0100">Branched-chain amino acid biosynthesis</keyword>
<keyword id="KW-0408">Iron</keyword>
<keyword id="KW-0411">Iron-sulfur</keyword>
<keyword id="KW-0432">Leucine biosynthesis</keyword>
<keyword id="KW-0456">Lyase</keyword>
<keyword id="KW-0479">Metal-binding</keyword>
<keyword id="KW-1185">Reference proteome</keyword>
<accession>Q31LZ1</accession>
<gene>
    <name evidence="1" type="primary">leuC</name>
    <name type="ordered locus">Synpcc7942_1898</name>
</gene>